<name>VTM2B_MOUSE</name>
<sequence length="285" mass="30160">MEQRNRLGALGYLLPLLLHSLLLFVADATFTEVPKDVTVREGDDIEMPCAFRASGATSYSLEIQWWYLKEPPRELLHELALSVPGARSKVTNKDATKISTVRVQGNDISHRLRLSAVRLQDEGVYECRVSDYSDDDTQEHKAQALLRVLSRFAPPNMQAAEAVSHIQSSGPRRHGASSAVSSNNAGAAVRTTSETSHDDKNPPPGSPPAGSGVPEAAAAAASATHTATTTAAAAAASSSASPPSGQAVLLRQRHGSGTGPGYSADPLLSLLLLALHKFLHPLLGH</sequence>
<accession>Q9JME9</accession>
<accession>Q8CEK5</accession>
<organism>
    <name type="scientific">Mus musculus</name>
    <name type="common">Mouse</name>
    <dbReference type="NCBI Taxonomy" id="10090"/>
    <lineage>
        <taxon>Eukaryota</taxon>
        <taxon>Metazoa</taxon>
        <taxon>Chordata</taxon>
        <taxon>Craniata</taxon>
        <taxon>Vertebrata</taxon>
        <taxon>Euteleostomi</taxon>
        <taxon>Mammalia</taxon>
        <taxon>Eutheria</taxon>
        <taxon>Euarchontoglires</taxon>
        <taxon>Glires</taxon>
        <taxon>Rodentia</taxon>
        <taxon>Myomorpha</taxon>
        <taxon>Muroidea</taxon>
        <taxon>Muridae</taxon>
        <taxon>Murinae</taxon>
        <taxon>Mus</taxon>
        <taxon>Mus</taxon>
    </lineage>
</organism>
<reference key="1">
    <citation type="journal article" date="2000" name="Biochem. Biophys. Res. Commun.">
        <title>Growth suppression of Escherichia coli by induction of expression of mammalian genes with transmembrane or ATPase domains.</title>
        <authorList>
            <person name="Inoue S."/>
            <person name="Sano H."/>
            <person name="Ohta M."/>
        </authorList>
    </citation>
    <scope>NUCLEOTIDE SEQUENCE [MRNA]</scope>
    <source>
        <tissue>Brain</tissue>
    </source>
</reference>
<reference key="2">
    <citation type="journal article" date="2005" name="Science">
        <title>The transcriptional landscape of the mammalian genome.</title>
        <authorList>
            <person name="Carninci P."/>
            <person name="Kasukawa T."/>
            <person name="Katayama S."/>
            <person name="Gough J."/>
            <person name="Frith M.C."/>
            <person name="Maeda N."/>
            <person name="Oyama R."/>
            <person name="Ravasi T."/>
            <person name="Lenhard B."/>
            <person name="Wells C."/>
            <person name="Kodzius R."/>
            <person name="Shimokawa K."/>
            <person name="Bajic V.B."/>
            <person name="Brenner S.E."/>
            <person name="Batalov S."/>
            <person name="Forrest A.R."/>
            <person name="Zavolan M."/>
            <person name="Davis M.J."/>
            <person name="Wilming L.G."/>
            <person name="Aidinis V."/>
            <person name="Allen J.E."/>
            <person name="Ambesi-Impiombato A."/>
            <person name="Apweiler R."/>
            <person name="Aturaliya R.N."/>
            <person name="Bailey T.L."/>
            <person name="Bansal M."/>
            <person name="Baxter L."/>
            <person name="Beisel K.W."/>
            <person name="Bersano T."/>
            <person name="Bono H."/>
            <person name="Chalk A.M."/>
            <person name="Chiu K.P."/>
            <person name="Choudhary V."/>
            <person name="Christoffels A."/>
            <person name="Clutterbuck D.R."/>
            <person name="Crowe M.L."/>
            <person name="Dalla E."/>
            <person name="Dalrymple B.P."/>
            <person name="de Bono B."/>
            <person name="Della Gatta G."/>
            <person name="di Bernardo D."/>
            <person name="Down T."/>
            <person name="Engstrom P."/>
            <person name="Fagiolini M."/>
            <person name="Faulkner G."/>
            <person name="Fletcher C.F."/>
            <person name="Fukushima T."/>
            <person name="Furuno M."/>
            <person name="Futaki S."/>
            <person name="Gariboldi M."/>
            <person name="Georgii-Hemming P."/>
            <person name="Gingeras T.R."/>
            <person name="Gojobori T."/>
            <person name="Green R.E."/>
            <person name="Gustincich S."/>
            <person name="Harbers M."/>
            <person name="Hayashi Y."/>
            <person name="Hensch T.K."/>
            <person name="Hirokawa N."/>
            <person name="Hill D."/>
            <person name="Huminiecki L."/>
            <person name="Iacono M."/>
            <person name="Ikeo K."/>
            <person name="Iwama A."/>
            <person name="Ishikawa T."/>
            <person name="Jakt M."/>
            <person name="Kanapin A."/>
            <person name="Katoh M."/>
            <person name="Kawasawa Y."/>
            <person name="Kelso J."/>
            <person name="Kitamura H."/>
            <person name="Kitano H."/>
            <person name="Kollias G."/>
            <person name="Krishnan S.P."/>
            <person name="Kruger A."/>
            <person name="Kummerfeld S.K."/>
            <person name="Kurochkin I.V."/>
            <person name="Lareau L.F."/>
            <person name="Lazarevic D."/>
            <person name="Lipovich L."/>
            <person name="Liu J."/>
            <person name="Liuni S."/>
            <person name="McWilliam S."/>
            <person name="Madan Babu M."/>
            <person name="Madera M."/>
            <person name="Marchionni L."/>
            <person name="Matsuda H."/>
            <person name="Matsuzawa S."/>
            <person name="Miki H."/>
            <person name="Mignone F."/>
            <person name="Miyake S."/>
            <person name="Morris K."/>
            <person name="Mottagui-Tabar S."/>
            <person name="Mulder N."/>
            <person name="Nakano N."/>
            <person name="Nakauchi H."/>
            <person name="Ng P."/>
            <person name="Nilsson R."/>
            <person name="Nishiguchi S."/>
            <person name="Nishikawa S."/>
            <person name="Nori F."/>
            <person name="Ohara O."/>
            <person name="Okazaki Y."/>
            <person name="Orlando V."/>
            <person name="Pang K.C."/>
            <person name="Pavan W.J."/>
            <person name="Pavesi G."/>
            <person name="Pesole G."/>
            <person name="Petrovsky N."/>
            <person name="Piazza S."/>
            <person name="Reed J."/>
            <person name="Reid J.F."/>
            <person name="Ring B.Z."/>
            <person name="Ringwald M."/>
            <person name="Rost B."/>
            <person name="Ruan Y."/>
            <person name="Salzberg S.L."/>
            <person name="Sandelin A."/>
            <person name="Schneider C."/>
            <person name="Schoenbach C."/>
            <person name="Sekiguchi K."/>
            <person name="Semple C.A."/>
            <person name="Seno S."/>
            <person name="Sessa L."/>
            <person name="Sheng Y."/>
            <person name="Shibata Y."/>
            <person name="Shimada H."/>
            <person name="Shimada K."/>
            <person name="Silva D."/>
            <person name="Sinclair B."/>
            <person name="Sperling S."/>
            <person name="Stupka E."/>
            <person name="Sugiura K."/>
            <person name="Sultana R."/>
            <person name="Takenaka Y."/>
            <person name="Taki K."/>
            <person name="Tammoja K."/>
            <person name="Tan S.L."/>
            <person name="Tang S."/>
            <person name="Taylor M.S."/>
            <person name="Tegner J."/>
            <person name="Teichmann S.A."/>
            <person name="Ueda H.R."/>
            <person name="van Nimwegen E."/>
            <person name="Verardo R."/>
            <person name="Wei C.L."/>
            <person name="Yagi K."/>
            <person name="Yamanishi H."/>
            <person name="Zabarovsky E."/>
            <person name="Zhu S."/>
            <person name="Zimmer A."/>
            <person name="Hide W."/>
            <person name="Bult C."/>
            <person name="Grimmond S.M."/>
            <person name="Teasdale R.D."/>
            <person name="Liu E.T."/>
            <person name="Brusic V."/>
            <person name="Quackenbush J."/>
            <person name="Wahlestedt C."/>
            <person name="Mattick J.S."/>
            <person name="Hume D.A."/>
            <person name="Kai C."/>
            <person name="Sasaki D."/>
            <person name="Tomaru Y."/>
            <person name="Fukuda S."/>
            <person name="Kanamori-Katayama M."/>
            <person name="Suzuki M."/>
            <person name="Aoki J."/>
            <person name="Arakawa T."/>
            <person name="Iida J."/>
            <person name="Imamura K."/>
            <person name="Itoh M."/>
            <person name="Kato T."/>
            <person name="Kawaji H."/>
            <person name="Kawagashira N."/>
            <person name="Kawashima T."/>
            <person name="Kojima M."/>
            <person name="Kondo S."/>
            <person name="Konno H."/>
            <person name="Nakano K."/>
            <person name="Ninomiya N."/>
            <person name="Nishio T."/>
            <person name="Okada M."/>
            <person name="Plessy C."/>
            <person name="Shibata K."/>
            <person name="Shiraki T."/>
            <person name="Suzuki S."/>
            <person name="Tagami M."/>
            <person name="Waki K."/>
            <person name="Watahiki A."/>
            <person name="Okamura-Oho Y."/>
            <person name="Suzuki H."/>
            <person name="Kawai J."/>
            <person name="Hayashizaki Y."/>
        </authorList>
    </citation>
    <scope>NUCLEOTIDE SEQUENCE [LARGE SCALE MRNA] OF 165-285</scope>
    <source>
        <strain>C57BL/6J</strain>
        <tissue>Diencephalon</tissue>
    </source>
</reference>
<gene>
    <name type="primary">Vstm2b</name>
</gene>
<proteinExistence type="evidence at transcript level"/>
<feature type="signal peptide" evidence="1">
    <location>
        <begin position="1"/>
        <end position="28"/>
    </location>
</feature>
<feature type="chain" id="PRO_0000319944" description="V-set and transmembrane domain-containing protein 2B">
    <location>
        <begin position="29"/>
        <end position="285"/>
    </location>
</feature>
<feature type="topological domain" description="Extracellular" evidence="1">
    <location>
        <begin position="29"/>
        <end position="263"/>
    </location>
</feature>
<feature type="transmembrane region" description="Helical" evidence="1">
    <location>
        <begin position="264"/>
        <end position="284"/>
    </location>
</feature>
<feature type="topological domain" description="Cytoplasmic" evidence="1">
    <location>
        <position position="285"/>
    </location>
</feature>
<feature type="domain" description="Ig-like V-type">
    <location>
        <begin position="29"/>
        <end position="143"/>
    </location>
</feature>
<feature type="region of interest" description="Disordered" evidence="3">
    <location>
        <begin position="160"/>
        <end position="225"/>
    </location>
</feature>
<feature type="compositionally biased region" description="Low complexity" evidence="3">
    <location>
        <begin position="176"/>
        <end position="189"/>
    </location>
</feature>
<feature type="compositionally biased region" description="Low complexity" evidence="3">
    <location>
        <begin position="208"/>
        <end position="225"/>
    </location>
</feature>
<feature type="disulfide bond" evidence="2">
    <location>
        <begin position="49"/>
        <end position="127"/>
    </location>
</feature>
<feature type="sequence conflict" description="In Ref. 2; BAC25628." evidence="4" ref="2">
    <original>H</original>
    <variation>D</variation>
    <location>
        <position position="165"/>
    </location>
</feature>
<feature type="sequence conflict" description="In Ref. 2; BAC25628." evidence="4" ref="2">
    <original>L</original>
    <variation>Q</variation>
    <location>
        <position position="267"/>
    </location>
</feature>
<protein>
    <recommendedName>
        <fullName>V-set and transmembrane domain-containing protein 2B</fullName>
    </recommendedName>
</protein>
<keyword id="KW-1015">Disulfide bond</keyword>
<keyword id="KW-0393">Immunoglobulin domain</keyword>
<keyword id="KW-0472">Membrane</keyword>
<keyword id="KW-1185">Reference proteome</keyword>
<keyword id="KW-0732">Signal</keyword>
<keyword id="KW-0812">Transmembrane</keyword>
<keyword id="KW-1133">Transmembrane helix</keyword>
<evidence type="ECO:0000255" key="1"/>
<evidence type="ECO:0000255" key="2">
    <source>
        <dbReference type="PROSITE-ProRule" id="PRU00114"/>
    </source>
</evidence>
<evidence type="ECO:0000256" key="3">
    <source>
        <dbReference type="SAM" id="MobiDB-lite"/>
    </source>
</evidence>
<evidence type="ECO:0000305" key="4"/>
<comment type="subcellular location">
    <subcellularLocation>
        <location evidence="4">Membrane</location>
        <topology evidence="4">Single-pass type I membrane protein</topology>
    </subcellularLocation>
</comment>
<dbReference type="EMBL" id="AB030198">
    <property type="protein sequence ID" value="BAA92761.1"/>
    <property type="molecule type" value="mRNA"/>
</dbReference>
<dbReference type="EMBL" id="AK020370">
    <property type="protein sequence ID" value="BAC25628.1"/>
    <property type="molecule type" value="mRNA"/>
</dbReference>
<dbReference type="CCDS" id="CCDS21160.1"/>
<dbReference type="RefSeq" id="NP_001405563.1">
    <property type="nucleotide sequence ID" value="NM_001418634.1"/>
</dbReference>
<dbReference type="RefSeq" id="NP_067362.1">
    <property type="nucleotide sequence ID" value="NM_021387.4"/>
</dbReference>
<dbReference type="SMR" id="Q9JME9"/>
<dbReference type="FunCoup" id="Q9JME9">
    <property type="interactions" value="637"/>
</dbReference>
<dbReference type="STRING" id="10090.ENSMUSP00000044002"/>
<dbReference type="PhosphoSitePlus" id="Q9JME9"/>
<dbReference type="PaxDb" id="10090-ENSMUSP00000044002"/>
<dbReference type="PeptideAtlas" id="Q9JME9"/>
<dbReference type="ProteomicsDB" id="297828"/>
<dbReference type="Antibodypedia" id="76668">
    <property type="antibodies" value="1 antibodies from 1 providers"/>
</dbReference>
<dbReference type="DNASU" id="58188"/>
<dbReference type="Ensembl" id="ENSMUST00000044705.12">
    <property type="protein sequence ID" value="ENSMUSP00000044002.10"/>
    <property type="gene ID" value="ENSMUSG00000039257.12"/>
</dbReference>
<dbReference type="Ensembl" id="ENSMUST00000205845.2">
    <property type="protein sequence ID" value="ENSMUSP00000146231.2"/>
    <property type="gene ID" value="ENSMUSG00000039257.12"/>
</dbReference>
<dbReference type="GeneID" id="58188"/>
<dbReference type="KEGG" id="mmu:58188"/>
<dbReference type="UCSC" id="uc009glh.1">
    <property type="organism name" value="mouse"/>
</dbReference>
<dbReference type="AGR" id="MGI:1914525"/>
<dbReference type="CTD" id="342865"/>
<dbReference type="MGI" id="MGI:1914525">
    <property type="gene designation" value="Vstm2b"/>
</dbReference>
<dbReference type="VEuPathDB" id="HostDB:ENSMUSG00000039257"/>
<dbReference type="eggNOG" id="ENOG502QSS5">
    <property type="taxonomic scope" value="Eukaryota"/>
</dbReference>
<dbReference type="GeneTree" id="ENSGT00940000161356"/>
<dbReference type="HOGENOM" id="CLU_081009_0_0_1"/>
<dbReference type="InParanoid" id="Q9JME9"/>
<dbReference type="OMA" id="YQCRVSD"/>
<dbReference type="OrthoDB" id="9942060at2759"/>
<dbReference type="PhylomeDB" id="Q9JME9"/>
<dbReference type="TreeFam" id="TF331739"/>
<dbReference type="BioGRID-ORCS" id="58188">
    <property type="hits" value="1 hit in 77 CRISPR screens"/>
</dbReference>
<dbReference type="ChiTaRS" id="Vstm2b">
    <property type="organism name" value="mouse"/>
</dbReference>
<dbReference type="PRO" id="PR:Q9JME9"/>
<dbReference type="Proteomes" id="UP000000589">
    <property type="component" value="Chromosome 7"/>
</dbReference>
<dbReference type="RNAct" id="Q9JME9">
    <property type="molecule type" value="protein"/>
</dbReference>
<dbReference type="Bgee" id="ENSMUSG00000039257">
    <property type="expression patterns" value="Expressed in pyloric antrum and 148 other cell types or tissues"/>
</dbReference>
<dbReference type="ExpressionAtlas" id="Q9JME9">
    <property type="expression patterns" value="baseline and differential"/>
</dbReference>
<dbReference type="GO" id="GO:0016020">
    <property type="term" value="C:membrane"/>
    <property type="evidence" value="ECO:0007669"/>
    <property type="project" value="UniProtKB-SubCell"/>
</dbReference>
<dbReference type="FunFam" id="2.60.40.10:FF:000804">
    <property type="entry name" value="V-set and transmembrane domain containing 2B"/>
    <property type="match status" value="1"/>
</dbReference>
<dbReference type="Gene3D" id="2.60.40.10">
    <property type="entry name" value="Immunoglobulins"/>
    <property type="match status" value="1"/>
</dbReference>
<dbReference type="InterPro" id="IPR007110">
    <property type="entry name" value="Ig-like_dom"/>
</dbReference>
<dbReference type="InterPro" id="IPR036179">
    <property type="entry name" value="Ig-like_dom_sf"/>
</dbReference>
<dbReference type="InterPro" id="IPR013783">
    <property type="entry name" value="Ig-like_fold"/>
</dbReference>
<dbReference type="InterPro" id="IPR003599">
    <property type="entry name" value="Ig_sub"/>
</dbReference>
<dbReference type="InterPro" id="IPR013106">
    <property type="entry name" value="Ig_V-set"/>
</dbReference>
<dbReference type="InterPro" id="IPR051102">
    <property type="entry name" value="IgSF_V-set/TM_domain"/>
</dbReference>
<dbReference type="PANTHER" id="PTHR12207">
    <property type="entry name" value="V-SET AND TRANSMEMBRANE DOMAIN-CONTAINING PROTEIN"/>
    <property type="match status" value="1"/>
</dbReference>
<dbReference type="PANTHER" id="PTHR12207:SF27">
    <property type="entry name" value="V-SET AND TRANSMEMBRANE DOMAIN-CONTAINING PROTEIN 2B"/>
    <property type="match status" value="1"/>
</dbReference>
<dbReference type="Pfam" id="PF07686">
    <property type="entry name" value="V-set"/>
    <property type="match status" value="1"/>
</dbReference>
<dbReference type="SMART" id="SM00409">
    <property type="entry name" value="IG"/>
    <property type="match status" value="1"/>
</dbReference>
<dbReference type="SUPFAM" id="SSF48726">
    <property type="entry name" value="Immunoglobulin"/>
    <property type="match status" value="1"/>
</dbReference>
<dbReference type="PROSITE" id="PS50835">
    <property type="entry name" value="IG_LIKE"/>
    <property type="match status" value="1"/>
</dbReference>